<feature type="chain" id="PRO_0000231425" description="Deoxyuridine 5'-triphosphate nucleotidohydrolase">
    <location>
        <begin position="1"/>
        <end position="148"/>
    </location>
</feature>
<feature type="binding site" evidence="1">
    <location>
        <begin position="68"/>
        <end position="70"/>
    </location>
    <ligand>
        <name>substrate</name>
    </ligand>
</feature>
<feature type="binding site" evidence="1">
    <location>
        <position position="81"/>
    </location>
    <ligand>
        <name>substrate</name>
    </ligand>
</feature>
<feature type="binding site" evidence="1">
    <location>
        <begin position="85"/>
        <end position="87"/>
    </location>
    <ligand>
        <name>substrate</name>
    </ligand>
</feature>
<feature type="binding site" evidence="1">
    <location>
        <position position="95"/>
    </location>
    <ligand>
        <name>substrate</name>
    </ligand>
</feature>
<proteinExistence type="inferred from homology"/>
<protein>
    <recommendedName>
        <fullName evidence="1">Deoxyuridine 5'-triphosphate nucleotidohydrolase</fullName>
        <shortName evidence="1">dUTPase</shortName>
        <ecNumber evidence="1">3.6.1.23</ecNumber>
    </recommendedName>
    <alternativeName>
        <fullName evidence="1">dUTP pyrophosphatase</fullName>
    </alternativeName>
</protein>
<dbReference type="EC" id="3.6.1.23" evidence="1"/>
<dbReference type="EMBL" id="CP000053">
    <property type="protein sequence ID" value="AAY61471.1"/>
    <property type="molecule type" value="Genomic_DNA"/>
</dbReference>
<dbReference type="SMR" id="Q4ULV2"/>
<dbReference type="STRING" id="315456.RF_0620"/>
<dbReference type="KEGG" id="rfe:RF_0620"/>
<dbReference type="eggNOG" id="COG0756">
    <property type="taxonomic scope" value="Bacteria"/>
</dbReference>
<dbReference type="HOGENOM" id="CLU_068508_1_2_5"/>
<dbReference type="OrthoDB" id="9809956at2"/>
<dbReference type="UniPathway" id="UPA00610">
    <property type="reaction ID" value="UER00666"/>
</dbReference>
<dbReference type="Proteomes" id="UP000008548">
    <property type="component" value="Chromosome"/>
</dbReference>
<dbReference type="GO" id="GO:0004170">
    <property type="term" value="F:dUTP diphosphatase activity"/>
    <property type="evidence" value="ECO:0007669"/>
    <property type="project" value="UniProtKB-UniRule"/>
</dbReference>
<dbReference type="GO" id="GO:0000287">
    <property type="term" value="F:magnesium ion binding"/>
    <property type="evidence" value="ECO:0007669"/>
    <property type="project" value="UniProtKB-UniRule"/>
</dbReference>
<dbReference type="GO" id="GO:0006226">
    <property type="term" value="P:dUMP biosynthetic process"/>
    <property type="evidence" value="ECO:0007669"/>
    <property type="project" value="UniProtKB-UniRule"/>
</dbReference>
<dbReference type="GO" id="GO:0046081">
    <property type="term" value="P:dUTP catabolic process"/>
    <property type="evidence" value="ECO:0007669"/>
    <property type="project" value="InterPro"/>
</dbReference>
<dbReference type="CDD" id="cd07557">
    <property type="entry name" value="trimeric_dUTPase"/>
    <property type="match status" value="1"/>
</dbReference>
<dbReference type="FunFam" id="2.70.40.10:FF:000002">
    <property type="entry name" value="dUTP diphosphatase"/>
    <property type="match status" value="1"/>
</dbReference>
<dbReference type="Gene3D" id="2.70.40.10">
    <property type="match status" value="1"/>
</dbReference>
<dbReference type="HAMAP" id="MF_00116">
    <property type="entry name" value="dUTPase_bact"/>
    <property type="match status" value="1"/>
</dbReference>
<dbReference type="InterPro" id="IPR008181">
    <property type="entry name" value="dUTPase"/>
</dbReference>
<dbReference type="InterPro" id="IPR029054">
    <property type="entry name" value="dUTPase-like"/>
</dbReference>
<dbReference type="InterPro" id="IPR036157">
    <property type="entry name" value="dUTPase-like_sf"/>
</dbReference>
<dbReference type="InterPro" id="IPR033704">
    <property type="entry name" value="dUTPase_trimeric"/>
</dbReference>
<dbReference type="NCBIfam" id="TIGR00576">
    <property type="entry name" value="dut"/>
    <property type="match status" value="1"/>
</dbReference>
<dbReference type="NCBIfam" id="NF001862">
    <property type="entry name" value="PRK00601.1"/>
    <property type="match status" value="1"/>
</dbReference>
<dbReference type="PANTHER" id="PTHR11241">
    <property type="entry name" value="DEOXYURIDINE 5'-TRIPHOSPHATE NUCLEOTIDOHYDROLASE"/>
    <property type="match status" value="1"/>
</dbReference>
<dbReference type="PANTHER" id="PTHR11241:SF0">
    <property type="entry name" value="DEOXYURIDINE 5'-TRIPHOSPHATE NUCLEOTIDOHYDROLASE"/>
    <property type="match status" value="1"/>
</dbReference>
<dbReference type="Pfam" id="PF00692">
    <property type="entry name" value="dUTPase"/>
    <property type="match status" value="1"/>
</dbReference>
<dbReference type="SUPFAM" id="SSF51283">
    <property type="entry name" value="dUTPase-like"/>
    <property type="match status" value="1"/>
</dbReference>
<reference key="1">
    <citation type="journal article" date="2005" name="PLoS Biol.">
        <title>The genome sequence of Rickettsia felis identifies the first putative conjugative plasmid in an obligate intracellular parasite.</title>
        <authorList>
            <person name="Ogata H."/>
            <person name="Renesto P."/>
            <person name="Audic S."/>
            <person name="Robert C."/>
            <person name="Blanc G."/>
            <person name="Fournier P.-E."/>
            <person name="Parinello H."/>
            <person name="Claverie J.-M."/>
            <person name="Raoult D."/>
        </authorList>
    </citation>
    <scope>NUCLEOTIDE SEQUENCE [LARGE SCALE GENOMIC DNA]</scope>
    <source>
        <strain>ATCC VR-1525 / URRWXCal2</strain>
    </source>
</reference>
<organism>
    <name type="scientific">Rickettsia felis (strain ATCC VR-1525 / URRWXCal2)</name>
    <name type="common">Rickettsia azadi</name>
    <dbReference type="NCBI Taxonomy" id="315456"/>
    <lineage>
        <taxon>Bacteria</taxon>
        <taxon>Pseudomonadati</taxon>
        <taxon>Pseudomonadota</taxon>
        <taxon>Alphaproteobacteria</taxon>
        <taxon>Rickettsiales</taxon>
        <taxon>Rickettsiaceae</taxon>
        <taxon>Rickettsieae</taxon>
        <taxon>Rickettsia</taxon>
        <taxon>spotted fever group</taxon>
    </lineage>
</organism>
<comment type="function">
    <text evidence="1">This enzyme is involved in nucleotide metabolism: it produces dUMP, the immediate precursor of thymidine nucleotides and it decreases the intracellular concentration of dUTP so that uracil cannot be incorporated into DNA.</text>
</comment>
<comment type="catalytic activity">
    <reaction evidence="1">
        <text>dUTP + H2O = dUMP + diphosphate + H(+)</text>
        <dbReference type="Rhea" id="RHEA:10248"/>
        <dbReference type="ChEBI" id="CHEBI:15377"/>
        <dbReference type="ChEBI" id="CHEBI:15378"/>
        <dbReference type="ChEBI" id="CHEBI:33019"/>
        <dbReference type="ChEBI" id="CHEBI:61555"/>
        <dbReference type="ChEBI" id="CHEBI:246422"/>
        <dbReference type="EC" id="3.6.1.23"/>
    </reaction>
</comment>
<comment type="cofactor">
    <cofactor evidence="1">
        <name>Mg(2+)</name>
        <dbReference type="ChEBI" id="CHEBI:18420"/>
    </cofactor>
</comment>
<comment type="pathway">
    <text evidence="1">Pyrimidine metabolism; dUMP biosynthesis; dUMP from dCTP (dUTP route): step 2/2.</text>
</comment>
<comment type="similarity">
    <text evidence="1">Belongs to the dUTPase family.</text>
</comment>
<name>DUT_RICFE</name>
<evidence type="ECO:0000255" key="1">
    <source>
        <dbReference type="HAMAP-Rule" id="MF_00116"/>
    </source>
</evidence>
<gene>
    <name evidence="1" type="primary">dut</name>
    <name type="ordered locus">RF_0620</name>
</gene>
<sequence length="148" mass="15975">MTITQVKIKKLENFSGSLPEYATEHSAGMDLIAANEQPITIKAGEIQLIPTGIAIALPDSFEAQIRPRSGLAVKHGITVANSPGTIDADYRGEIKVILINLGKEDFVIEKGMRIAQMIIAKYERILWEESSSLTETMRGSGGFGSTGV</sequence>
<keyword id="KW-0378">Hydrolase</keyword>
<keyword id="KW-0460">Magnesium</keyword>
<keyword id="KW-0479">Metal-binding</keyword>
<keyword id="KW-0546">Nucleotide metabolism</keyword>
<accession>Q4ULV2</accession>